<feature type="chain" id="PRO_0000270305" description="Methionine import ATP-binding protein MetN">
    <location>
        <begin position="1"/>
        <end position="342"/>
    </location>
</feature>
<feature type="domain" description="ABC transporter" evidence="1">
    <location>
        <begin position="2"/>
        <end position="241"/>
    </location>
</feature>
<feature type="binding site" evidence="1">
    <location>
        <begin position="38"/>
        <end position="45"/>
    </location>
    <ligand>
        <name>ATP</name>
        <dbReference type="ChEBI" id="CHEBI:30616"/>
    </ligand>
</feature>
<organism>
    <name type="scientific">Geobacillus kaustophilus (strain HTA426)</name>
    <dbReference type="NCBI Taxonomy" id="235909"/>
    <lineage>
        <taxon>Bacteria</taxon>
        <taxon>Bacillati</taxon>
        <taxon>Bacillota</taxon>
        <taxon>Bacilli</taxon>
        <taxon>Bacillales</taxon>
        <taxon>Anoxybacillaceae</taxon>
        <taxon>Geobacillus</taxon>
        <taxon>Geobacillus thermoleovorans group</taxon>
    </lineage>
</organism>
<keyword id="KW-0029">Amino-acid transport</keyword>
<keyword id="KW-0067">ATP-binding</keyword>
<keyword id="KW-1003">Cell membrane</keyword>
<keyword id="KW-0472">Membrane</keyword>
<keyword id="KW-0547">Nucleotide-binding</keyword>
<keyword id="KW-1185">Reference proteome</keyword>
<keyword id="KW-1278">Translocase</keyword>
<keyword id="KW-0813">Transport</keyword>
<comment type="function">
    <text evidence="1">Part of the ABC transporter complex MetNIQ involved in methionine import. Responsible for energy coupling to the transport system.</text>
</comment>
<comment type="catalytic activity">
    <reaction evidence="1">
        <text>L-methionine(out) + ATP + H2O = L-methionine(in) + ADP + phosphate + H(+)</text>
        <dbReference type="Rhea" id="RHEA:29779"/>
        <dbReference type="ChEBI" id="CHEBI:15377"/>
        <dbReference type="ChEBI" id="CHEBI:15378"/>
        <dbReference type="ChEBI" id="CHEBI:30616"/>
        <dbReference type="ChEBI" id="CHEBI:43474"/>
        <dbReference type="ChEBI" id="CHEBI:57844"/>
        <dbReference type="ChEBI" id="CHEBI:456216"/>
        <dbReference type="EC" id="7.4.2.11"/>
    </reaction>
</comment>
<comment type="catalytic activity">
    <reaction evidence="1">
        <text>D-methionine(out) + ATP + H2O = D-methionine(in) + ADP + phosphate + H(+)</text>
        <dbReference type="Rhea" id="RHEA:29767"/>
        <dbReference type="ChEBI" id="CHEBI:15377"/>
        <dbReference type="ChEBI" id="CHEBI:15378"/>
        <dbReference type="ChEBI" id="CHEBI:30616"/>
        <dbReference type="ChEBI" id="CHEBI:43474"/>
        <dbReference type="ChEBI" id="CHEBI:57932"/>
        <dbReference type="ChEBI" id="CHEBI:456216"/>
        <dbReference type="EC" id="7.4.2.11"/>
    </reaction>
</comment>
<comment type="subunit">
    <text evidence="1">The complex is composed of two ATP-binding proteins (MetN), two transmembrane proteins (MetI) and a solute-binding protein (MetQ).</text>
</comment>
<comment type="subcellular location">
    <subcellularLocation>
        <location evidence="1">Cell membrane</location>
        <topology evidence="1">Peripheral membrane protein</topology>
    </subcellularLocation>
</comment>
<comment type="similarity">
    <text evidence="1">Belongs to the ABC transporter superfamily. Methionine importer (TC 3.A.1.24) family.</text>
</comment>
<proteinExistence type="inferred from homology"/>
<evidence type="ECO:0000255" key="1">
    <source>
        <dbReference type="HAMAP-Rule" id="MF_01719"/>
    </source>
</evidence>
<sequence>MITLEQVTKIYQAANGSVTAVDNVSLEIREGEIFGIIGYSGAGKSTLIRLLNGLEKPTSGRVVVAGRDMTRVKGRELRKARQEIGMIFQHFNLLWSRTVRENIAFPLEIAGVPKEERNKRVDELIELVGLSGREDAYPSQLSGGQKQRVGIARALANNPKVLLCDEATSALDPQTTDAILDLLVDINKRLGLTIVLITHEMHVIRKICDRVAVMESGRIVEQGEVLHVFRNPQQPITKRFVKQLIEPEETEEAISHLFGQYPSGLIAQLTFVGAAAGKPLITEVVRQFAVDVNILQGKISQTHQGAYGVLFVHLDGARDEIDRALDYIQRQQVAVEVIHDAR</sequence>
<gene>
    <name evidence="1" type="primary">metN</name>
    <name type="ordered locus">GK2999</name>
</gene>
<name>METN_GEOKA</name>
<accession>Q5KVK2</accession>
<reference key="1">
    <citation type="journal article" date="2004" name="Nucleic Acids Res.">
        <title>Thermoadaptation trait revealed by the genome sequence of thermophilic Geobacillus kaustophilus.</title>
        <authorList>
            <person name="Takami H."/>
            <person name="Takaki Y."/>
            <person name="Chee G.-J."/>
            <person name="Nishi S."/>
            <person name="Shimamura S."/>
            <person name="Suzuki H."/>
            <person name="Matsui S."/>
            <person name="Uchiyama I."/>
        </authorList>
    </citation>
    <scope>NUCLEOTIDE SEQUENCE [LARGE SCALE GENOMIC DNA]</scope>
    <source>
        <strain>HTA426</strain>
    </source>
</reference>
<protein>
    <recommendedName>
        <fullName evidence="1">Methionine import ATP-binding protein MetN</fullName>
        <ecNumber evidence="1">7.4.2.11</ecNumber>
    </recommendedName>
</protein>
<dbReference type="EC" id="7.4.2.11" evidence="1"/>
<dbReference type="EMBL" id="BA000043">
    <property type="protein sequence ID" value="BAD77284.1"/>
    <property type="molecule type" value="Genomic_DNA"/>
</dbReference>
<dbReference type="RefSeq" id="WP_011232469.1">
    <property type="nucleotide sequence ID" value="NC_006510.1"/>
</dbReference>
<dbReference type="SMR" id="Q5KVK2"/>
<dbReference type="STRING" id="235909.GK2999"/>
<dbReference type="KEGG" id="gka:GK2999"/>
<dbReference type="eggNOG" id="COG1135">
    <property type="taxonomic scope" value="Bacteria"/>
</dbReference>
<dbReference type="HOGENOM" id="CLU_000604_1_3_9"/>
<dbReference type="Proteomes" id="UP000001172">
    <property type="component" value="Chromosome"/>
</dbReference>
<dbReference type="GO" id="GO:0005886">
    <property type="term" value="C:plasma membrane"/>
    <property type="evidence" value="ECO:0007669"/>
    <property type="project" value="UniProtKB-SubCell"/>
</dbReference>
<dbReference type="GO" id="GO:0033232">
    <property type="term" value="F:ABC-type D-methionine transporter activity"/>
    <property type="evidence" value="ECO:0007669"/>
    <property type="project" value="UniProtKB-EC"/>
</dbReference>
<dbReference type="GO" id="GO:0005524">
    <property type="term" value="F:ATP binding"/>
    <property type="evidence" value="ECO:0007669"/>
    <property type="project" value="UniProtKB-KW"/>
</dbReference>
<dbReference type="GO" id="GO:0016887">
    <property type="term" value="F:ATP hydrolysis activity"/>
    <property type="evidence" value="ECO:0007669"/>
    <property type="project" value="InterPro"/>
</dbReference>
<dbReference type="CDD" id="cd03258">
    <property type="entry name" value="ABC_MetN_methionine_transporter"/>
    <property type="match status" value="1"/>
</dbReference>
<dbReference type="FunFam" id="3.40.50.300:FF:000233">
    <property type="entry name" value="Methionine import ATP-binding protein MetN"/>
    <property type="match status" value="1"/>
</dbReference>
<dbReference type="Gene3D" id="3.30.70.260">
    <property type="match status" value="1"/>
</dbReference>
<dbReference type="Gene3D" id="3.40.50.300">
    <property type="entry name" value="P-loop containing nucleotide triphosphate hydrolases"/>
    <property type="match status" value="1"/>
</dbReference>
<dbReference type="InterPro" id="IPR003593">
    <property type="entry name" value="AAA+_ATPase"/>
</dbReference>
<dbReference type="InterPro" id="IPR003439">
    <property type="entry name" value="ABC_transporter-like_ATP-bd"/>
</dbReference>
<dbReference type="InterPro" id="IPR017871">
    <property type="entry name" value="ABC_transporter-like_CS"/>
</dbReference>
<dbReference type="InterPro" id="IPR045865">
    <property type="entry name" value="ACT-like_dom_sf"/>
</dbReference>
<dbReference type="InterPro" id="IPR041701">
    <property type="entry name" value="MetN_ABC"/>
</dbReference>
<dbReference type="InterPro" id="IPR050086">
    <property type="entry name" value="MetN_ABC_transporter-like"/>
</dbReference>
<dbReference type="InterPro" id="IPR018449">
    <property type="entry name" value="NIL_domain"/>
</dbReference>
<dbReference type="InterPro" id="IPR027417">
    <property type="entry name" value="P-loop_NTPase"/>
</dbReference>
<dbReference type="PANTHER" id="PTHR43166">
    <property type="entry name" value="AMINO ACID IMPORT ATP-BINDING PROTEIN"/>
    <property type="match status" value="1"/>
</dbReference>
<dbReference type="PANTHER" id="PTHR43166:SF36">
    <property type="entry name" value="METHIONINE IMPORT ATP-BINDING PROTEIN METN 2"/>
    <property type="match status" value="1"/>
</dbReference>
<dbReference type="Pfam" id="PF00005">
    <property type="entry name" value="ABC_tran"/>
    <property type="match status" value="1"/>
</dbReference>
<dbReference type="Pfam" id="PF09383">
    <property type="entry name" value="NIL"/>
    <property type="match status" value="1"/>
</dbReference>
<dbReference type="SMART" id="SM00382">
    <property type="entry name" value="AAA"/>
    <property type="match status" value="1"/>
</dbReference>
<dbReference type="SMART" id="SM00930">
    <property type="entry name" value="NIL"/>
    <property type="match status" value="1"/>
</dbReference>
<dbReference type="SUPFAM" id="SSF55021">
    <property type="entry name" value="ACT-like"/>
    <property type="match status" value="1"/>
</dbReference>
<dbReference type="SUPFAM" id="SSF52540">
    <property type="entry name" value="P-loop containing nucleoside triphosphate hydrolases"/>
    <property type="match status" value="1"/>
</dbReference>
<dbReference type="PROSITE" id="PS00211">
    <property type="entry name" value="ABC_TRANSPORTER_1"/>
    <property type="match status" value="1"/>
</dbReference>
<dbReference type="PROSITE" id="PS50893">
    <property type="entry name" value="ABC_TRANSPORTER_2"/>
    <property type="match status" value="1"/>
</dbReference>
<dbReference type="PROSITE" id="PS51264">
    <property type="entry name" value="METN"/>
    <property type="match status" value="1"/>
</dbReference>